<name>RS13_METMP</name>
<protein>
    <recommendedName>
        <fullName evidence="1">Small ribosomal subunit protein uS13</fullName>
    </recommendedName>
    <alternativeName>
        <fullName evidence="2">30S ribosomal protein S13</fullName>
    </alternativeName>
</protein>
<evidence type="ECO:0000255" key="1">
    <source>
        <dbReference type="HAMAP-Rule" id="MF_01315"/>
    </source>
</evidence>
<evidence type="ECO:0000305" key="2"/>
<dbReference type="EMBL" id="BX950229">
    <property type="protein sequence ID" value="CAF30875.1"/>
    <property type="molecule type" value="Genomic_DNA"/>
</dbReference>
<dbReference type="RefSeq" id="WP_011171263.1">
    <property type="nucleotide sequence ID" value="NC_005791.1"/>
</dbReference>
<dbReference type="SMR" id="Q6LXN1"/>
<dbReference type="STRING" id="267377.MMP1319"/>
<dbReference type="EnsemblBacteria" id="CAF30875">
    <property type="protein sequence ID" value="CAF30875"/>
    <property type="gene ID" value="MMP1319"/>
</dbReference>
<dbReference type="KEGG" id="mmp:MMP1319"/>
<dbReference type="PATRIC" id="fig|267377.15.peg.1354"/>
<dbReference type="eggNOG" id="arCOG01722">
    <property type="taxonomic scope" value="Archaea"/>
</dbReference>
<dbReference type="HOGENOM" id="CLU_103849_0_0_2"/>
<dbReference type="OrthoDB" id="372127at2157"/>
<dbReference type="Proteomes" id="UP000000590">
    <property type="component" value="Chromosome"/>
</dbReference>
<dbReference type="GO" id="GO:0005829">
    <property type="term" value="C:cytosol"/>
    <property type="evidence" value="ECO:0007669"/>
    <property type="project" value="TreeGrafter"/>
</dbReference>
<dbReference type="GO" id="GO:0015935">
    <property type="term" value="C:small ribosomal subunit"/>
    <property type="evidence" value="ECO:0007669"/>
    <property type="project" value="TreeGrafter"/>
</dbReference>
<dbReference type="GO" id="GO:0019843">
    <property type="term" value="F:rRNA binding"/>
    <property type="evidence" value="ECO:0007669"/>
    <property type="project" value="UniProtKB-UniRule"/>
</dbReference>
<dbReference type="GO" id="GO:0003735">
    <property type="term" value="F:structural constituent of ribosome"/>
    <property type="evidence" value="ECO:0007669"/>
    <property type="project" value="InterPro"/>
</dbReference>
<dbReference type="GO" id="GO:0006412">
    <property type="term" value="P:translation"/>
    <property type="evidence" value="ECO:0007669"/>
    <property type="project" value="UniProtKB-UniRule"/>
</dbReference>
<dbReference type="Gene3D" id="1.10.8.50">
    <property type="match status" value="1"/>
</dbReference>
<dbReference type="Gene3D" id="4.10.910.10">
    <property type="entry name" value="30s ribosomal protein s13, domain 2"/>
    <property type="match status" value="1"/>
</dbReference>
<dbReference type="HAMAP" id="MF_01315">
    <property type="entry name" value="Ribosomal_uS13"/>
    <property type="match status" value="1"/>
</dbReference>
<dbReference type="InterPro" id="IPR027437">
    <property type="entry name" value="Rbsml_uS13_C"/>
</dbReference>
<dbReference type="InterPro" id="IPR001892">
    <property type="entry name" value="Ribosomal_uS13"/>
</dbReference>
<dbReference type="InterPro" id="IPR010979">
    <property type="entry name" value="Ribosomal_uS13-like_H2TH"/>
</dbReference>
<dbReference type="InterPro" id="IPR019977">
    <property type="entry name" value="Ribosomal_uS13_archaeal"/>
</dbReference>
<dbReference type="NCBIfam" id="NF003140">
    <property type="entry name" value="PRK04053.1"/>
    <property type="match status" value="1"/>
</dbReference>
<dbReference type="NCBIfam" id="TIGR03629">
    <property type="entry name" value="uS13_arch"/>
    <property type="match status" value="1"/>
</dbReference>
<dbReference type="PANTHER" id="PTHR10871">
    <property type="entry name" value="30S RIBOSOMAL PROTEIN S13/40S RIBOSOMAL PROTEIN S18"/>
    <property type="match status" value="1"/>
</dbReference>
<dbReference type="PANTHER" id="PTHR10871:SF3">
    <property type="entry name" value="SMALL RIBOSOMAL SUBUNIT PROTEIN US13"/>
    <property type="match status" value="1"/>
</dbReference>
<dbReference type="Pfam" id="PF00416">
    <property type="entry name" value="Ribosomal_S13"/>
    <property type="match status" value="1"/>
</dbReference>
<dbReference type="PIRSF" id="PIRSF002134">
    <property type="entry name" value="Ribosomal_S13"/>
    <property type="match status" value="1"/>
</dbReference>
<dbReference type="SUPFAM" id="SSF46946">
    <property type="entry name" value="S13-like H2TH domain"/>
    <property type="match status" value="1"/>
</dbReference>
<dbReference type="PROSITE" id="PS50159">
    <property type="entry name" value="RIBOSOMAL_S13_2"/>
    <property type="match status" value="1"/>
</dbReference>
<accession>Q6LXN1</accession>
<sequence>MTQTEFKHRIRISKTDLEGKNPLEYALQDMKGIGRAMARAVIRVTELDPKQQAGYLADEDVLKIESVLEDPATHGIPSWMFNRKKDVYSGLDKHLIETDLVLTVQEDITNMKKIRCYKGIRHELRLPCRGQRTRGSFRKGTSMGVKRKK</sequence>
<gene>
    <name evidence="1" type="primary">rps13</name>
    <name type="ordered locus">MMP1319</name>
</gene>
<feature type="chain" id="PRO_0000306754" description="Small ribosomal subunit protein uS13">
    <location>
        <begin position="1"/>
        <end position="149"/>
    </location>
</feature>
<proteinExistence type="inferred from homology"/>
<comment type="function">
    <text evidence="1">Located at the top of the head of the 30S subunit, it contacts several helices of the 16S rRNA. In the 70S ribosome it contacts the 23S rRNA (bridge B1a) and protein L5 of the 50S subunit (bridge B1b), connecting the 2 subunits; these bridges are implicated in subunit movement.</text>
</comment>
<comment type="subunit">
    <text evidence="1">Part of the 30S ribosomal subunit. Forms a loose heterodimer with protein S19. Forms two bridges to the 50S subunit in the 70S ribosome.</text>
</comment>
<comment type="similarity">
    <text evidence="1">Belongs to the universal ribosomal protein uS13 family.</text>
</comment>
<organism>
    <name type="scientific">Methanococcus maripaludis (strain DSM 14266 / JCM 13030 / NBRC 101832 / S2 / LL)</name>
    <dbReference type="NCBI Taxonomy" id="267377"/>
    <lineage>
        <taxon>Archaea</taxon>
        <taxon>Methanobacteriati</taxon>
        <taxon>Methanobacteriota</taxon>
        <taxon>Methanomada group</taxon>
        <taxon>Methanococci</taxon>
        <taxon>Methanococcales</taxon>
        <taxon>Methanococcaceae</taxon>
        <taxon>Methanococcus</taxon>
    </lineage>
</organism>
<keyword id="KW-1185">Reference proteome</keyword>
<keyword id="KW-0687">Ribonucleoprotein</keyword>
<keyword id="KW-0689">Ribosomal protein</keyword>
<keyword id="KW-0694">RNA-binding</keyword>
<keyword id="KW-0699">rRNA-binding</keyword>
<reference key="1">
    <citation type="journal article" date="2004" name="J. Bacteriol.">
        <title>Complete genome sequence of the genetically tractable hydrogenotrophic methanogen Methanococcus maripaludis.</title>
        <authorList>
            <person name="Hendrickson E.L."/>
            <person name="Kaul R."/>
            <person name="Zhou Y."/>
            <person name="Bovee D."/>
            <person name="Chapman P."/>
            <person name="Chung J."/>
            <person name="Conway de Macario E."/>
            <person name="Dodsworth J.A."/>
            <person name="Gillett W."/>
            <person name="Graham D.E."/>
            <person name="Hackett M."/>
            <person name="Haydock A.K."/>
            <person name="Kang A."/>
            <person name="Land M.L."/>
            <person name="Levy R."/>
            <person name="Lie T.J."/>
            <person name="Major T.A."/>
            <person name="Moore B.C."/>
            <person name="Porat I."/>
            <person name="Palmeiri A."/>
            <person name="Rouse G."/>
            <person name="Saenphimmachak C."/>
            <person name="Soell D."/>
            <person name="Van Dien S."/>
            <person name="Wang T."/>
            <person name="Whitman W.B."/>
            <person name="Xia Q."/>
            <person name="Zhang Y."/>
            <person name="Larimer F.W."/>
            <person name="Olson M.V."/>
            <person name="Leigh J.A."/>
        </authorList>
    </citation>
    <scope>NUCLEOTIDE SEQUENCE [LARGE SCALE GENOMIC DNA]</scope>
    <source>
        <strain>DSM 14266 / JCM 13030 / NBRC 101832 / S2 / LL</strain>
    </source>
</reference>